<dbReference type="EC" id="3.4.21.88" evidence="1"/>
<dbReference type="EMBL" id="AP009389">
    <property type="protein sequence ID" value="BAF59534.1"/>
    <property type="molecule type" value="Genomic_DNA"/>
</dbReference>
<dbReference type="SMR" id="A5D2J8"/>
<dbReference type="STRING" id="370438.PTH_1353"/>
<dbReference type="MEROPS" id="S24.001"/>
<dbReference type="KEGG" id="pth:PTH_1353"/>
<dbReference type="eggNOG" id="COG1974">
    <property type="taxonomic scope" value="Bacteria"/>
</dbReference>
<dbReference type="HOGENOM" id="CLU_066192_45_1_9"/>
<dbReference type="Proteomes" id="UP000006556">
    <property type="component" value="Chromosome"/>
</dbReference>
<dbReference type="GO" id="GO:0003677">
    <property type="term" value="F:DNA binding"/>
    <property type="evidence" value="ECO:0007669"/>
    <property type="project" value="UniProtKB-UniRule"/>
</dbReference>
<dbReference type="GO" id="GO:0004252">
    <property type="term" value="F:serine-type endopeptidase activity"/>
    <property type="evidence" value="ECO:0007669"/>
    <property type="project" value="UniProtKB-UniRule"/>
</dbReference>
<dbReference type="GO" id="GO:0006281">
    <property type="term" value="P:DNA repair"/>
    <property type="evidence" value="ECO:0007669"/>
    <property type="project" value="UniProtKB-UniRule"/>
</dbReference>
<dbReference type="GO" id="GO:0006260">
    <property type="term" value="P:DNA replication"/>
    <property type="evidence" value="ECO:0007669"/>
    <property type="project" value="UniProtKB-UniRule"/>
</dbReference>
<dbReference type="GO" id="GO:0045892">
    <property type="term" value="P:negative regulation of DNA-templated transcription"/>
    <property type="evidence" value="ECO:0007669"/>
    <property type="project" value="UniProtKB-UniRule"/>
</dbReference>
<dbReference type="GO" id="GO:0006508">
    <property type="term" value="P:proteolysis"/>
    <property type="evidence" value="ECO:0007669"/>
    <property type="project" value="InterPro"/>
</dbReference>
<dbReference type="GO" id="GO:0009432">
    <property type="term" value="P:SOS response"/>
    <property type="evidence" value="ECO:0007669"/>
    <property type="project" value="UniProtKB-UniRule"/>
</dbReference>
<dbReference type="CDD" id="cd06529">
    <property type="entry name" value="S24_LexA-like"/>
    <property type="match status" value="1"/>
</dbReference>
<dbReference type="FunFam" id="1.10.10.10:FF:000009">
    <property type="entry name" value="LexA repressor"/>
    <property type="match status" value="1"/>
</dbReference>
<dbReference type="FunFam" id="2.10.109.10:FF:000001">
    <property type="entry name" value="LexA repressor"/>
    <property type="match status" value="1"/>
</dbReference>
<dbReference type="Gene3D" id="2.10.109.10">
    <property type="entry name" value="Umud Fragment, subunit A"/>
    <property type="match status" value="1"/>
</dbReference>
<dbReference type="Gene3D" id="1.10.10.10">
    <property type="entry name" value="Winged helix-like DNA-binding domain superfamily/Winged helix DNA-binding domain"/>
    <property type="match status" value="1"/>
</dbReference>
<dbReference type="HAMAP" id="MF_00015">
    <property type="entry name" value="LexA"/>
    <property type="match status" value="1"/>
</dbReference>
<dbReference type="InterPro" id="IPR006200">
    <property type="entry name" value="LexA"/>
</dbReference>
<dbReference type="InterPro" id="IPR039418">
    <property type="entry name" value="LexA-like"/>
</dbReference>
<dbReference type="InterPro" id="IPR036286">
    <property type="entry name" value="LexA/Signal_pep-like_sf"/>
</dbReference>
<dbReference type="InterPro" id="IPR006199">
    <property type="entry name" value="LexA_DNA-bd_dom"/>
</dbReference>
<dbReference type="InterPro" id="IPR050077">
    <property type="entry name" value="LexA_repressor"/>
</dbReference>
<dbReference type="InterPro" id="IPR006197">
    <property type="entry name" value="Peptidase_S24_LexA"/>
</dbReference>
<dbReference type="InterPro" id="IPR015927">
    <property type="entry name" value="Peptidase_S24_S26A/B/C"/>
</dbReference>
<dbReference type="InterPro" id="IPR036388">
    <property type="entry name" value="WH-like_DNA-bd_sf"/>
</dbReference>
<dbReference type="InterPro" id="IPR036390">
    <property type="entry name" value="WH_DNA-bd_sf"/>
</dbReference>
<dbReference type="NCBIfam" id="TIGR00498">
    <property type="entry name" value="lexA"/>
    <property type="match status" value="1"/>
</dbReference>
<dbReference type="PANTHER" id="PTHR33516">
    <property type="entry name" value="LEXA REPRESSOR"/>
    <property type="match status" value="1"/>
</dbReference>
<dbReference type="PANTHER" id="PTHR33516:SF2">
    <property type="entry name" value="LEXA REPRESSOR-RELATED"/>
    <property type="match status" value="1"/>
</dbReference>
<dbReference type="Pfam" id="PF01726">
    <property type="entry name" value="LexA_DNA_bind"/>
    <property type="match status" value="1"/>
</dbReference>
<dbReference type="Pfam" id="PF00717">
    <property type="entry name" value="Peptidase_S24"/>
    <property type="match status" value="1"/>
</dbReference>
<dbReference type="PRINTS" id="PR00726">
    <property type="entry name" value="LEXASERPTASE"/>
</dbReference>
<dbReference type="SUPFAM" id="SSF51306">
    <property type="entry name" value="LexA/Signal peptidase"/>
    <property type="match status" value="1"/>
</dbReference>
<dbReference type="SUPFAM" id="SSF46785">
    <property type="entry name" value="Winged helix' DNA-binding domain"/>
    <property type="match status" value="1"/>
</dbReference>
<feature type="chain" id="PRO_1000074060" description="LexA repressor">
    <location>
        <begin position="1"/>
        <end position="203"/>
    </location>
</feature>
<feature type="DNA-binding region" description="H-T-H motif" evidence="1">
    <location>
        <begin position="29"/>
        <end position="49"/>
    </location>
</feature>
<feature type="active site" description="For autocatalytic cleavage activity" evidence="1">
    <location>
        <position position="126"/>
    </location>
</feature>
<feature type="active site" description="For autocatalytic cleavage activity" evidence="1">
    <location>
        <position position="163"/>
    </location>
</feature>
<feature type="site" description="Cleavage; by autolysis" evidence="1">
    <location>
        <begin position="91"/>
        <end position="92"/>
    </location>
</feature>
<reference key="1">
    <citation type="journal article" date="2008" name="Genome Res.">
        <title>The genome of Pelotomaculum thermopropionicum reveals niche-associated evolution in anaerobic microbiota.</title>
        <authorList>
            <person name="Kosaka T."/>
            <person name="Kato S."/>
            <person name="Shimoyama T."/>
            <person name="Ishii S."/>
            <person name="Abe T."/>
            <person name="Watanabe K."/>
        </authorList>
    </citation>
    <scope>NUCLEOTIDE SEQUENCE [LARGE SCALE GENOMIC DNA]</scope>
    <source>
        <strain>DSM 13744 / JCM 10971 / SI</strain>
    </source>
</reference>
<evidence type="ECO:0000255" key="1">
    <source>
        <dbReference type="HAMAP-Rule" id="MF_00015"/>
    </source>
</evidence>
<proteinExistence type="inferred from homology"/>
<name>LEXA_PELTS</name>
<gene>
    <name evidence="1" type="primary">lexA</name>
    <name type="ordered locus">PTH_1353</name>
</gene>
<protein>
    <recommendedName>
        <fullName evidence="1">LexA repressor</fullName>
        <ecNumber evidence="1">3.4.21.88</ecNumber>
    </recommendedName>
</protein>
<keyword id="KW-0068">Autocatalytic cleavage</keyword>
<keyword id="KW-0227">DNA damage</keyword>
<keyword id="KW-0234">DNA repair</keyword>
<keyword id="KW-0235">DNA replication</keyword>
<keyword id="KW-0238">DNA-binding</keyword>
<keyword id="KW-0378">Hydrolase</keyword>
<keyword id="KW-1185">Reference proteome</keyword>
<keyword id="KW-0678">Repressor</keyword>
<keyword id="KW-0742">SOS response</keyword>
<keyword id="KW-0804">Transcription</keyword>
<keyword id="KW-0805">Transcription regulation</keyword>
<accession>A5D2J8</accession>
<organism>
    <name type="scientific">Pelotomaculum thermopropionicum (strain DSM 13744 / JCM 10971 / SI)</name>
    <dbReference type="NCBI Taxonomy" id="370438"/>
    <lineage>
        <taxon>Bacteria</taxon>
        <taxon>Bacillati</taxon>
        <taxon>Bacillota</taxon>
        <taxon>Clostridia</taxon>
        <taxon>Eubacteriales</taxon>
        <taxon>Desulfotomaculaceae</taxon>
        <taxon>Pelotomaculum</taxon>
    </lineage>
</organism>
<sequence length="203" mass="22567">MTEELTPKQAAVLEFIKKSIRQRGYPPSVREIGQEVGLSSSSTVHGYLKKLEEKGYLRRDATKPRAIEVLDNPAGEKVEFINVPVLGRVAAGVPLLAVENREDIFPLPVHFTGSGEFFMLTVRGDSMIEAGILNGDMVVVRRQQDAGNGDIVVALLEEEATVKRLFKENGRIRLQPENRLMEPIYAAEVQILGKVIGLVRKIY</sequence>
<comment type="function">
    <text evidence="1">Represses a number of genes involved in the response to DNA damage (SOS response), including recA and lexA. In the presence of single-stranded DNA, RecA interacts with LexA causing an autocatalytic cleavage which disrupts the DNA-binding part of LexA, leading to derepression of the SOS regulon and eventually DNA repair.</text>
</comment>
<comment type="catalytic activity">
    <reaction evidence="1">
        <text>Hydrolysis of Ala-|-Gly bond in repressor LexA.</text>
        <dbReference type="EC" id="3.4.21.88"/>
    </reaction>
</comment>
<comment type="subunit">
    <text evidence="1">Homodimer.</text>
</comment>
<comment type="similarity">
    <text evidence="1">Belongs to the peptidase S24 family.</text>
</comment>